<gene>
    <name type="primary">DDT</name>
</gene>
<organism>
    <name type="scientific">Bos taurus</name>
    <name type="common">Bovine</name>
    <dbReference type="NCBI Taxonomy" id="9913"/>
    <lineage>
        <taxon>Eukaryota</taxon>
        <taxon>Metazoa</taxon>
        <taxon>Chordata</taxon>
        <taxon>Craniata</taxon>
        <taxon>Vertebrata</taxon>
        <taxon>Euteleostomi</taxon>
        <taxon>Mammalia</taxon>
        <taxon>Eutheria</taxon>
        <taxon>Laurasiatheria</taxon>
        <taxon>Artiodactyla</taxon>
        <taxon>Ruminantia</taxon>
        <taxon>Pecora</taxon>
        <taxon>Bovidae</taxon>
        <taxon>Bovinae</taxon>
        <taxon>Bos</taxon>
    </lineage>
</organism>
<evidence type="ECO:0000250" key="1">
    <source>
        <dbReference type="UniProtKB" id="O35215"/>
    </source>
</evidence>
<evidence type="ECO:0000250" key="2">
    <source>
        <dbReference type="UniProtKB" id="P30046"/>
    </source>
</evidence>
<evidence type="ECO:0000305" key="3"/>
<sequence length="118" mass="12877">MPFVELDTSLPAGRVPAGLEKRLCAATAAILSKPEDRVNVTVRSGLAMVVNGSAEPSAQLLVSSIGVVGTAEENRGHSARFFEFLTKELDLAEDRIMIRFFPLERWQIGKKGTVMTFL</sequence>
<protein>
    <recommendedName>
        <fullName>D-dopachrome decarboxylase</fullName>
        <ecNumber evidence="2">4.1.1.84</ecNumber>
    </recommendedName>
    <alternativeName>
        <fullName>D-dopachrome tautomerase</fullName>
    </alternativeName>
</protein>
<name>DOPD_BOVIN</name>
<dbReference type="EC" id="4.1.1.84" evidence="2"/>
<dbReference type="EMBL" id="BC142376">
    <property type="protein sequence ID" value="AAI42377.1"/>
    <property type="molecule type" value="mRNA"/>
</dbReference>
<dbReference type="RefSeq" id="NP_001092620.1">
    <property type="nucleotide sequence ID" value="NM_001099150.1"/>
</dbReference>
<dbReference type="SMR" id="A5PK65"/>
<dbReference type="FunCoup" id="A5PK65">
    <property type="interactions" value="218"/>
</dbReference>
<dbReference type="STRING" id="9913.ENSBTAP00000065643"/>
<dbReference type="PaxDb" id="9913-ENSBTAP00000029458"/>
<dbReference type="GeneID" id="615999"/>
<dbReference type="KEGG" id="bta:615999"/>
<dbReference type="CTD" id="1652"/>
<dbReference type="VEuPathDB" id="HostDB:ENSBTAG00000022027"/>
<dbReference type="eggNOG" id="KOG1759">
    <property type="taxonomic scope" value="Eukaryota"/>
</dbReference>
<dbReference type="HOGENOM" id="CLU_129906_2_0_1"/>
<dbReference type="InParanoid" id="A5PK65"/>
<dbReference type="OMA" id="PDRINIR"/>
<dbReference type="OrthoDB" id="6080988at2759"/>
<dbReference type="TreeFam" id="TF313853"/>
<dbReference type="Proteomes" id="UP000009136">
    <property type="component" value="Chromosome 17"/>
</dbReference>
<dbReference type="Bgee" id="ENSBTAG00000022027">
    <property type="expression patterns" value="Expressed in cortex of kidney and 106 other cell types or tissues"/>
</dbReference>
<dbReference type="GO" id="GO:0005737">
    <property type="term" value="C:cytoplasm"/>
    <property type="evidence" value="ECO:0007669"/>
    <property type="project" value="UniProtKB-SubCell"/>
</dbReference>
<dbReference type="GO" id="GO:0005615">
    <property type="term" value="C:extracellular space"/>
    <property type="evidence" value="ECO:0000318"/>
    <property type="project" value="GO_Central"/>
</dbReference>
<dbReference type="GO" id="GO:0033981">
    <property type="term" value="F:D-dopachrome decarboxylase activity"/>
    <property type="evidence" value="ECO:0000250"/>
    <property type="project" value="UniProtKB"/>
</dbReference>
<dbReference type="GO" id="GO:0050178">
    <property type="term" value="F:phenylpyruvate tautomerase activity"/>
    <property type="evidence" value="ECO:0000318"/>
    <property type="project" value="GO_Central"/>
</dbReference>
<dbReference type="GO" id="GO:0042438">
    <property type="term" value="P:melanin biosynthetic process"/>
    <property type="evidence" value="ECO:0007669"/>
    <property type="project" value="UniProtKB-KW"/>
</dbReference>
<dbReference type="FunFam" id="3.30.429.10:FF:000003">
    <property type="entry name" value="D-dopachrome decarboxylase"/>
    <property type="match status" value="1"/>
</dbReference>
<dbReference type="Gene3D" id="3.30.429.10">
    <property type="entry name" value="Macrophage Migration Inhibitory Factor"/>
    <property type="match status" value="1"/>
</dbReference>
<dbReference type="InterPro" id="IPR001398">
    <property type="entry name" value="Macrophage_inhib_fac"/>
</dbReference>
<dbReference type="InterPro" id="IPR014347">
    <property type="entry name" value="Tautomerase/MIF_sf"/>
</dbReference>
<dbReference type="PANTHER" id="PTHR11954">
    <property type="entry name" value="D-DOPACHROME DECARBOXYLASE"/>
    <property type="match status" value="1"/>
</dbReference>
<dbReference type="PANTHER" id="PTHR11954:SF22">
    <property type="entry name" value="D-DOPACHROME DECARBOXYLASE"/>
    <property type="match status" value="1"/>
</dbReference>
<dbReference type="Pfam" id="PF01187">
    <property type="entry name" value="MIF"/>
    <property type="match status" value="1"/>
</dbReference>
<dbReference type="SUPFAM" id="SSF55331">
    <property type="entry name" value="Tautomerase/MIF"/>
    <property type="match status" value="1"/>
</dbReference>
<comment type="function">
    <text evidence="2">Tautomerization of D-dopachrome with decarboxylation to give 5,6-dihydroxyindole (DHI).</text>
</comment>
<comment type="catalytic activity">
    <reaction evidence="2">
        <text>D-dopachrome + H(+) = 5,6-dihydroxyindole + CO2</text>
        <dbReference type="Rhea" id="RHEA:18441"/>
        <dbReference type="ChEBI" id="CHEBI:15378"/>
        <dbReference type="ChEBI" id="CHEBI:16526"/>
        <dbReference type="ChEBI" id="CHEBI:27404"/>
        <dbReference type="ChEBI" id="CHEBI:58782"/>
        <dbReference type="EC" id="4.1.1.84"/>
    </reaction>
    <physiologicalReaction direction="left-to-right" evidence="2">
        <dbReference type="Rhea" id="RHEA:18442"/>
    </physiologicalReaction>
</comment>
<comment type="subunit">
    <text evidence="2">Homotrimer.</text>
</comment>
<comment type="subcellular location">
    <subcellularLocation>
        <location evidence="2">Cytoplasm</location>
    </subcellularLocation>
</comment>
<comment type="similarity">
    <text evidence="3">Belongs to the MIF family.</text>
</comment>
<feature type="initiator methionine" description="Removed" evidence="1">
    <location>
        <position position="1"/>
    </location>
</feature>
<feature type="chain" id="PRO_0000337233" description="D-dopachrome decarboxylase">
    <location>
        <begin position="2"/>
        <end position="118"/>
    </location>
</feature>
<feature type="modified residue" description="N-acetylproline" evidence="1">
    <location>
        <position position="2"/>
    </location>
</feature>
<feature type="modified residue" description="N6-acetyllysine" evidence="1">
    <location>
        <position position="33"/>
    </location>
</feature>
<reference key="1">
    <citation type="submission" date="2007-06" db="EMBL/GenBank/DDBJ databases">
        <authorList>
            <consortium name="NIH - Mammalian Gene Collection (MGC) project"/>
        </authorList>
    </citation>
    <scope>NUCLEOTIDE SEQUENCE [LARGE SCALE MRNA]</scope>
    <source>
        <strain>Hereford</strain>
        <tissue>Testis</tissue>
    </source>
</reference>
<accession>A5PK65</accession>
<keyword id="KW-0007">Acetylation</keyword>
<keyword id="KW-0963">Cytoplasm</keyword>
<keyword id="KW-0456">Lyase</keyword>
<keyword id="KW-0470">Melanin biosynthesis</keyword>
<keyword id="KW-1185">Reference proteome</keyword>
<proteinExistence type="inferred from homology"/>